<reference key="1">
    <citation type="journal article" date="2024" name="Chem. Sci.">
        <title>Discovery and heterologous biosynthesis of glycosylated polyketide luteodienoside A reveals unprecedented glucinol-mediated product offloading by a fungal carnitine O-acyltransferase domain.</title>
        <authorList>
            <person name="Arishi A.A."/>
            <person name="Shang Z."/>
            <person name="Lacey E."/>
            <person name="Crombie A."/>
            <person name="Vuong D."/>
            <person name="Li H."/>
            <person name="Bracegirdle J."/>
            <person name="Turner P."/>
            <person name="Lewis W."/>
            <person name="Flematti G.R."/>
            <person name="Piggott A.M."/>
            <person name="Chooi Y.H."/>
        </authorList>
    </citation>
    <scope>NUCLEOTIDE SEQUENCE [GENOMIC DNA]</scope>
    <scope>FUNCTION</scope>
    <scope>CATALYTIC ACTIVITY</scope>
    <scope>PATHWAY</scope>
    <source>
        <strain>CBS 146723 / FRR 5427 / MST FP 2246</strain>
    </source>
</reference>
<sequence>MAVPLGALWAWSVLDKAVISYYSRKYKPVPLPERPNYSHKDVSIIVPTIDTEDTFTECMRLWLKANPREIVIATVERNKARVEQLIEPLRQQHADKIMVVTAALANKRHQLIVGVKSARGKIFALVDDDVYWHVDSVVPYLLAPFEDAEVGAVAGIQSAEVPPERQDVRVITPWEATATFDLCQWKGSREVHFAADGGCWCLSARTLFIRASILQDQSFANAYTQEVIGRRLVNTADDVVLTGLVFDRGWKVSIQNTPEAEVTTNIPRDHRLVWQVLRWDRGNFRTFLGYMLVSPGYRKMMQRHPYTTWKMVERLARPIWAFAYVWAWLQTLYTAPWIAYAYIAWMAFGWKGWLPTYREFLKRYPYCGRQMWAPLLMDYIGPIVDIYVYLTINNDDWLTRRADTKDIED</sequence>
<evidence type="ECO:0000255" key="1"/>
<evidence type="ECO:0000255" key="2">
    <source>
        <dbReference type="PROSITE-ProRule" id="PRU00498"/>
    </source>
</evidence>
<evidence type="ECO:0000269" key="3">
    <source>
    </source>
</evidence>
<evidence type="ECO:0000303" key="4">
    <source>
    </source>
</evidence>
<evidence type="ECO:0000305" key="5"/>
<keyword id="KW-0325">Glycoprotein</keyword>
<keyword id="KW-0328">Glycosyltransferase</keyword>
<keyword id="KW-0472">Membrane</keyword>
<keyword id="KW-0808">Transferase</keyword>
<keyword id="KW-0812">Transmembrane</keyword>
<keyword id="KW-1133">Transmembrane helix</keyword>
<protein>
    <recommendedName>
        <fullName evidence="4">NDP-glycosyltransferase ltbB</fullName>
        <ecNumber evidence="3">2.4.1.-</ecNumber>
    </recommendedName>
    <alternativeName>
        <fullName evidence="4">Luteodienoside A biosynthesis cluster protein B</fullName>
    </alternativeName>
</protein>
<organism>
    <name type="scientific">Aspergillus luteorubrus</name>
    <dbReference type="NCBI Taxonomy" id="2715282"/>
    <lineage>
        <taxon>Eukaryota</taxon>
        <taxon>Fungi</taxon>
        <taxon>Dikarya</taxon>
        <taxon>Ascomycota</taxon>
        <taxon>Pezizomycotina</taxon>
        <taxon>Eurotiomycetes</taxon>
        <taxon>Eurotiomycetidae</taxon>
        <taxon>Eurotiales</taxon>
        <taxon>Aspergillaceae</taxon>
        <taxon>Aspergillus</taxon>
    </lineage>
</organism>
<name>LTBB_ASPLT</name>
<comment type="function">
    <text evidence="3">NDP-glycosyltransferase; part of the gene cluster that mediates the biosynthesis of luteodienoside A, a glycosylated polyketide consisting of an unusual 1-O-beta-D-glucopyranosyl-myo-inositol (glucinol) ester of 3-hydroxy-2,2,4-trimethylocta-4,6-dienoic acid (PubMed:38425541). LtbB likely serves as a glucinol synthase by transferring D-glucose to myo-inositol using NDP-glucose as a substrate (PubMed:38425541). The ltbA carnitine O-acyltransferase (cAT) domain uses glucinol produced by the glycosyltransferase ltbB as an offloading substrate to release luteodienoside A from the HR-PKS (PubMed:38425541). Since ltbA and ltbB are sufficient for the biosynthesis of luteodienoside A, the functions of the methyltransferase ltbC and the FAD-binding monooxygenase ltbD within the pathway remain obscur (PubMed:38425541).</text>
</comment>
<comment type="pathway">
    <text evidence="3">Secondary metabolite biosynthesis.</text>
</comment>
<comment type="subcellular location">
    <subcellularLocation>
        <location evidence="1">Membrane</location>
        <topology evidence="1">Single-pass membrane protein</topology>
    </subcellularLocation>
</comment>
<comment type="similarity">
    <text evidence="5">Belongs to the GT2 glycosyltransferase family.</text>
</comment>
<dbReference type="EC" id="2.4.1.-" evidence="3"/>
<dbReference type="EMBL" id="OR597289">
    <property type="protein sequence ID" value="WWQ80774.1"/>
    <property type="molecule type" value="Genomic_DNA"/>
</dbReference>
<dbReference type="GO" id="GO:0016020">
    <property type="term" value="C:membrane"/>
    <property type="evidence" value="ECO:0007669"/>
    <property type="project" value="UniProtKB-SubCell"/>
</dbReference>
<dbReference type="GO" id="GO:0016757">
    <property type="term" value="F:glycosyltransferase activity"/>
    <property type="evidence" value="ECO:0007669"/>
    <property type="project" value="UniProtKB-KW"/>
</dbReference>
<dbReference type="Gene3D" id="3.90.550.10">
    <property type="entry name" value="Spore Coat Polysaccharide Biosynthesis Protein SpsA, Chain A"/>
    <property type="match status" value="1"/>
</dbReference>
<dbReference type="InterPro" id="IPR052427">
    <property type="entry name" value="Glycosyltrans_GT2/GT47"/>
</dbReference>
<dbReference type="InterPro" id="IPR029044">
    <property type="entry name" value="Nucleotide-diphossugar_trans"/>
</dbReference>
<dbReference type="PANTHER" id="PTHR47844:SF1">
    <property type="entry name" value="EXOSTOSIN-LIKE 2"/>
    <property type="match status" value="1"/>
</dbReference>
<dbReference type="PANTHER" id="PTHR47844">
    <property type="entry name" value="SYNTHASE CPS1, PUTATIVE (AFU_ORTHOLOGUE AFUA_7G02500)-RELATED"/>
    <property type="match status" value="1"/>
</dbReference>
<dbReference type="Pfam" id="PF13641">
    <property type="entry name" value="Glyco_tranf_2_3"/>
    <property type="match status" value="1"/>
</dbReference>
<dbReference type="SUPFAM" id="SSF53448">
    <property type="entry name" value="Nucleotide-diphospho-sugar transferases"/>
    <property type="match status" value="1"/>
</dbReference>
<feature type="chain" id="PRO_0000461479" description="NDP-glycosyltransferase ltbB">
    <location>
        <begin position="1"/>
        <end position="409"/>
    </location>
</feature>
<feature type="transmembrane region" description="Helical" evidence="1">
    <location>
        <begin position="319"/>
        <end position="339"/>
    </location>
</feature>
<feature type="glycosylation site" description="N-linked (GlcNAc...) asparagine" evidence="2">
    <location>
        <position position="36"/>
    </location>
</feature>
<proteinExistence type="evidence at protein level"/>
<accession>P9WEH5</accession>
<gene>
    <name evidence="4" type="primary">ltbB</name>
</gene>